<protein>
    <recommendedName>
        <fullName evidence="1">Small ribosomal subunit protein bS6</fullName>
    </recommendedName>
    <alternativeName>
        <fullName evidence="3">30S ribosomal protein S6</fullName>
    </alternativeName>
</protein>
<keyword id="KW-1185">Reference proteome</keyword>
<keyword id="KW-0687">Ribonucleoprotein</keyword>
<keyword id="KW-0689">Ribosomal protein</keyword>
<keyword id="KW-0694">RNA-binding</keyword>
<keyword id="KW-0699">rRNA-binding</keyword>
<comment type="function">
    <text evidence="1">Binds together with bS18 to 16S ribosomal RNA.</text>
</comment>
<comment type="similarity">
    <text evidence="1">Belongs to the bacterial ribosomal protein bS6 family.</text>
</comment>
<organism>
    <name type="scientific">Dinoroseobacter shibae (strain DSM 16493 / NCIMB 14021 / DFL 12)</name>
    <dbReference type="NCBI Taxonomy" id="398580"/>
    <lineage>
        <taxon>Bacteria</taxon>
        <taxon>Pseudomonadati</taxon>
        <taxon>Pseudomonadota</taxon>
        <taxon>Alphaproteobacteria</taxon>
        <taxon>Rhodobacterales</taxon>
        <taxon>Roseobacteraceae</taxon>
        <taxon>Dinoroseobacter</taxon>
    </lineage>
</organism>
<accession>A8LQQ5</accession>
<dbReference type="EMBL" id="CP000830">
    <property type="protein sequence ID" value="ABV93922.1"/>
    <property type="molecule type" value="Genomic_DNA"/>
</dbReference>
<dbReference type="RefSeq" id="WP_012178854.1">
    <property type="nucleotide sequence ID" value="NC_009952.1"/>
</dbReference>
<dbReference type="SMR" id="A8LQQ5"/>
<dbReference type="STRING" id="398580.Dshi_2186"/>
<dbReference type="KEGG" id="dsh:Dshi_2186"/>
<dbReference type="eggNOG" id="COG0360">
    <property type="taxonomic scope" value="Bacteria"/>
</dbReference>
<dbReference type="HOGENOM" id="CLU_113441_2_0_5"/>
<dbReference type="OrthoDB" id="9812702at2"/>
<dbReference type="Proteomes" id="UP000006833">
    <property type="component" value="Chromosome"/>
</dbReference>
<dbReference type="GO" id="GO:0022627">
    <property type="term" value="C:cytosolic small ribosomal subunit"/>
    <property type="evidence" value="ECO:0007669"/>
    <property type="project" value="TreeGrafter"/>
</dbReference>
<dbReference type="GO" id="GO:0070181">
    <property type="term" value="F:small ribosomal subunit rRNA binding"/>
    <property type="evidence" value="ECO:0007669"/>
    <property type="project" value="TreeGrafter"/>
</dbReference>
<dbReference type="GO" id="GO:0003735">
    <property type="term" value="F:structural constituent of ribosome"/>
    <property type="evidence" value="ECO:0007669"/>
    <property type="project" value="InterPro"/>
</dbReference>
<dbReference type="GO" id="GO:0006412">
    <property type="term" value="P:translation"/>
    <property type="evidence" value="ECO:0007669"/>
    <property type="project" value="UniProtKB-UniRule"/>
</dbReference>
<dbReference type="CDD" id="cd00473">
    <property type="entry name" value="bS6"/>
    <property type="match status" value="1"/>
</dbReference>
<dbReference type="Gene3D" id="3.30.70.60">
    <property type="match status" value="1"/>
</dbReference>
<dbReference type="HAMAP" id="MF_00360">
    <property type="entry name" value="Ribosomal_bS6"/>
    <property type="match status" value="1"/>
</dbReference>
<dbReference type="InterPro" id="IPR000529">
    <property type="entry name" value="Ribosomal_bS6"/>
</dbReference>
<dbReference type="InterPro" id="IPR035980">
    <property type="entry name" value="Ribosomal_bS6_sf"/>
</dbReference>
<dbReference type="InterPro" id="IPR020814">
    <property type="entry name" value="Ribosomal_S6_plastid/chlpt"/>
</dbReference>
<dbReference type="InterPro" id="IPR014717">
    <property type="entry name" value="Transl_elong_EF1B/ribsomal_bS6"/>
</dbReference>
<dbReference type="NCBIfam" id="TIGR00166">
    <property type="entry name" value="S6"/>
    <property type="match status" value="1"/>
</dbReference>
<dbReference type="PANTHER" id="PTHR21011">
    <property type="entry name" value="MITOCHONDRIAL 28S RIBOSOMAL PROTEIN S6"/>
    <property type="match status" value="1"/>
</dbReference>
<dbReference type="PANTHER" id="PTHR21011:SF1">
    <property type="entry name" value="SMALL RIBOSOMAL SUBUNIT PROTEIN BS6M"/>
    <property type="match status" value="1"/>
</dbReference>
<dbReference type="Pfam" id="PF01250">
    <property type="entry name" value="Ribosomal_S6"/>
    <property type="match status" value="1"/>
</dbReference>
<dbReference type="SUPFAM" id="SSF54995">
    <property type="entry name" value="Ribosomal protein S6"/>
    <property type="match status" value="1"/>
</dbReference>
<proteinExistence type="inferred from homology"/>
<feature type="chain" id="PRO_1000079443" description="Small ribosomal subunit protein bS6">
    <location>
        <begin position="1"/>
        <end position="117"/>
    </location>
</feature>
<feature type="region of interest" description="Disordered" evidence="2">
    <location>
        <begin position="92"/>
        <end position="117"/>
    </location>
</feature>
<feature type="compositionally biased region" description="Basic and acidic residues" evidence="2">
    <location>
        <begin position="105"/>
        <end position="117"/>
    </location>
</feature>
<sequence length="117" mass="13671">MPLYEHVFISRQDLSNAQAESLVEHFGSVLADNGGKVVDSEYWGLKTMAYKINKNRKGHYAFLKTDAPAPAVQEMERLMRLHDDVMRVMTIKVDEHPEGPSIQMQKREERDNRRERR</sequence>
<gene>
    <name evidence="1" type="primary">rpsF</name>
    <name type="ordered locus">Dshi_2186</name>
</gene>
<name>RS6_DINSH</name>
<evidence type="ECO:0000255" key="1">
    <source>
        <dbReference type="HAMAP-Rule" id="MF_00360"/>
    </source>
</evidence>
<evidence type="ECO:0000256" key="2">
    <source>
        <dbReference type="SAM" id="MobiDB-lite"/>
    </source>
</evidence>
<evidence type="ECO:0000305" key="3"/>
<reference key="1">
    <citation type="journal article" date="2010" name="ISME J.">
        <title>The complete genome sequence of the algal symbiont Dinoroseobacter shibae: a hitchhiker's guide to life in the sea.</title>
        <authorList>
            <person name="Wagner-Dobler I."/>
            <person name="Ballhausen B."/>
            <person name="Berger M."/>
            <person name="Brinkhoff T."/>
            <person name="Buchholz I."/>
            <person name="Bunk B."/>
            <person name="Cypionka H."/>
            <person name="Daniel R."/>
            <person name="Drepper T."/>
            <person name="Gerdts G."/>
            <person name="Hahnke S."/>
            <person name="Han C."/>
            <person name="Jahn D."/>
            <person name="Kalhoefer D."/>
            <person name="Kiss H."/>
            <person name="Klenk H.P."/>
            <person name="Kyrpides N."/>
            <person name="Liebl W."/>
            <person name="Liesegang H."/>
            <person name="Meincke L."/>
            <person name="Pati A."/>
            <person name="Petersen J."/>
            <person name="Piekarski T."/>
            <person name="Pommerenke C."/>
            <person name="Pradella S."/>
            <person name="Pukall R."/>
            <person name="Rabus R."/>
            <person name="Stackebrandt E."/>
            <person name="Thole S."/>
            <person name="Thompson L."/>
            <person name="Tielen P."/>
            <person name="Tomasch J."/>
            <person name="von Jan M."/>
            <person name="Wanphrut N."/>
            <person name="Wichels A."/>
            <person name="Zech H."/>
            <person name="Simon M."/>
        </authorList>
    </citation>
    <scope>NUCLEOTIDE SEQUENCE [LARGE SCALE GENOMIC DNA]</scope>
    <source>
        <strain>DSM 16493 / NCIMB 14021 / DFL 12</strain>
    </source>
</reference>